<name>MAC1_CANAL</name>
<reference key="1">
    <citation type="journal article" date="2004" name="Proc. Natl. Acad. Sci. U.S.A.">
        <title>The diploid genome sequence of Candida albicans.</title>
        <authorList>
            <person name="Jones T."/>
            <person name="Federspiel N.A."/>
            <person name="Chibana H."/>
            <person name="Dungan J."/>
            <person name="Kalman S."/>
            <person name="Magee B.B."/>
            <person name="Newport G."/>
            <person name="Thorstenson Y.R."/>
            <person name="Agabian N."/>
            <person name="Magee P.T."/>
            <person name="Davis R.W."/>
            <person name="Scherer S."/>
        </authorList>
    </citation>
    <scope>NUCLEOTIDE SEQUENCE [LARGE SCALE GENOMIC DNA]</scope>
    <source>
        <strain>SC5314 / ATCC MYA-2876</strain>
    </source>
</reference>
<reference key="2">
    <citation type="journal article" date="2007" name="Genome Biol.">
        <title>Assembly of the Candida albicans genome into sixteen supercontigs aligned on the eight chromosomes.</title>
        <authorList>
            <person name="van het Hoog M."/>
            <person name="Rast T.J."/>
            <person name="Martchenko M."/>
            <person name="Grindle S."/>
            <person name="Dignard D."/>
            <person name="Hogues H."/>
            <person name="Cuomo C."/>
            <person name="Berriman M."/>
            <person name="Scherer S."/>
            <person name="Magee B.B."/>
            <person name="Whiteway M."/>
            <person name="Chibana H."/>
            <person name="Nantel A."/>
            <person name="Magee P.T."/>
        </authorList>
    </citation>
    <scope>GENOME REANNOTATION</scope>
    <source>
        <strain>SC5314 / ATCC MYA-2876</strain>
    </source>
</reference>
<reference key="3">
    <citation type="journal article" date="2013" name="Genome Biol.">
        <title>Assembly of a phased diploid Candida albicans genome facilitates allele-specific measurements and provides a simple model for repeat and indel structure.</title>
        <authorList>
            <person name="Muzzey D."/>
            <person name="Schwartz K."/>
            <person name="Weissman J.S."/>
            <person name="Sherlock G."/>
        </authorList>
    </citation>
    <scope>NUCLEOTIDE SEQUENCE [LARGE SCALE GENOMIC DNA]</scope>
    <scope>GENOME REANNOTATION</scope>
    <source>
        <strain>SC5314 / ATCC MYA-2876</strain>
    </source>
</reference>
<reference key="4">
    <citation type="journal article" date="2004" name="Microbiology">
        <title>The CaCTR1 gene is required for high-affinity iron uptake and is transcriptionally controlled by a copper-sensing transactivator encoded by CaMAC1.</title>
        <authorList>
            <person name="Marvin M.E."/>
            <person name="Mason R.P."/>
            <person name="Cashmore A.M."/>
        </authorList>
    </citation>
    <scope>FUNCTION</scope>
    <scope>DISRUPTION PHENOTYPE</scope>
</reference>
<reference key="5">
    <citation type="journal article" date="2006" name="Acta Biochim. Biophys. Sin.">
        <title>CaMac1, a Candida albicans copper ion-sensing transcription factor, promotes filamentous and invasive growth in Saccharomyces cerevisiae.</title>
        <authorList>
            <person name="Huang G.H."/>
            <person name="Nie X.Y."/>
            <person name="Chen J.Y."/>
        </authorList>
    </citation>
    <scope>FUNCTION</scope>
</reference>
<reference key="6">
    <citation type="journal article" date="2009" name="J. Biophotonics">
        <title>From experimental setup to data analysis in transcriptomics: copper metabolism in the human pathogen Candida albicans.</title>
        <authorList>
            <person name="Hauser N.C."/>
            <person name="Dukalska M."/>
            <person name="Fellenberg K."/>
            <person name="Rupp S."/>
        </authorList>
    </citation>
    <scope>FUNCTION</scope>
    <scope>INDUCTION</scope>
</reference>
<reference key="7">
    <citation type="journal article" date="2010" name="FEMS Immunol. Med. Microbiol.">
        <title>Microbial interactions and differential protein expression in Staphylococcus aureus -Candida albicans dual-species biofilms.</title>
        <authorList>
            <person name="Peters B.M."/>
            <person name="Jabra-Rizk M.A."/>
            <person name="Scheper M.A."/>
            <person name="Leid J.G."/>
            <person name="Costerton J.W."/>
            <person name="Shirtliff M.E."/>
        </authorList>
    </citation>
    <scope>INDUCTION</scope>
</reference>
<dbReference type="EMBL" id="CP017629">
    <property type="protein sequence ID" value="AOW30430.1"/>
    <property type="molecule type" value="Genomic_DNA"/>
</dbReference>
<dbReference type="RefSeq" id="XP_720360.1">
    <property type="nucleotide sequence ID" value="XM_715267.1"/>
</dbReference>
<dbReference type="FunCoup" id="Q5AFK0">
    <property type="interactions" value="505"/>
</dbReference>
<dbReference type="STRING" id="237561.Q5AFK0"/>
<dbReference type="EnsemblFungi" id="C7_00510W_A-T">
    <property type="protein sequence ID" value="C7_00510W_A-T-p1"/>
    <property type="gene ID" value="C7_00510W_A"/>
</dbReference>
<dbReference type="GeneID" id="3637985"/>
<dbReference type="KEGG" id="cal:CAALFM_C700510WA"/>
<dbReference type="CGD" id="CAL0000188166">
    <property type="gene designation" value="MAC1"/>
</dbReference>
<dbReference type="VEuPathDB" id="FungiDB:C7_00510W_A"/>
<dbReference type="eggNOG" id="ENOG502QQ0T">
    <property type="taxonomic scope" value="Eukaryota"/>
</dbReference>
<dbReference type="HOGENOM" id="CLU_031396_0_0_1"/>
<dbReference type="InParanoid" id="Q5AFK0"/>
<dbReference type="OMA" id="CTNCETH"/>
<dbReference type="OrthoDB" id="5600085at2759"/>
<dbReference type="PHI-base" id="PHI:10336"/>
<dbReference type="Proteomes" id="UP000000559">
    <property type="component" value="Chromosome 7"/>
</dbReference>
<dbReference type="GO" id="GO:0005634">
    <property type="term" value="C:nucleus"/>
    <property type="evidence" value="ECO:0000318"/>
    <property type="project" value="GO_Central"/>
</dbReference>
<dbReference type="GO" id="GO:0005507">
    <property type="term" value="F:copper ion binding"/>
    <property type="evidence" value="ECO:0000318"/>
    <property type="project" value="GO_Central"/>
</dbReference>
<dbReference type="GO" id="GO:0001216">
    <property type="term" value="F:DNA-binding transcription activator activity"/>
    <property type="evidence" value="ECO:0000314"/>
    <property type="project" value="CGD"/>
</dbReference>
<dbReference type="GO" id="GO:0003700">
    <property type="term" value="F:DNA-binding transcription factor activity"/>
    <property type="evidence" value="ECO:0000315"/>
    <property type="project" value="CGD"/>
</dbReference>
<dbReference type="GO" id="GO:0000981">
    <property type="term" value="F:DNA-binding transcription factor activity, RNA polymerase II-specific"/>
    <property type="evidence" value="ECO:0000318"/>
    <property type="project" value="GO_Central"/>
</dbReference>
<dbReference type="GO" id="GO:0000978">
    <property type="term" value="F:RNA polymerase II cis-regulatory region sequence-specific DNA binding"/>
    <property type="evidence" value="ECO:0000318"/>
    <property type="project" value="GO_Central"/>
</dbReference>
<dbReference type="GO" id="GO:0010230">
    <property type="term" value="P:alternative respiration"/>
    <property type="evidence" value="ECO:0000315"/>
    <property type="project" value="CGD"/>
</dbReference>
<dbReference type="GO" id="GO:0044182">
    <property type="term" value="P:filamentous growth of a population of unicellular organisms"/>
    <property type="evidence" value="ECO:0000315"/>
    <property type="project" value="CGD"/>
</dbReference>
<dbReference type="GO" id="GO:0006878">
    <property type="term" value="P:intracellular copper ion homeostasis"/>
    <property type="evidence" value="ECO:0000315"/>
    <property type="project" value="CGD"/>
</dbReference>
<dbReference type="GO" id="GO:0006879">
    <property type="term" value="P:intracellular iron ion homeostasis"/>
    <property type="evidence" value="ECO:0000318"/>
    <property type="project" value="GO_Central"/>
</dbReference>
<dbReference type="GO" id="GO:0045944">
    <property type="term" value="P:positive regulation of transcription by RNA polymerase II"/>
    <property type="evidence" value="ECO:0000315"/>
    <property type="project" value="CGD"/>
</dbReference>
<dbReference type="FunFam" id="3.90.430.10:FF:000001">
    <property type="entry name" value="Copper fist DNA-binding protein"/>
    <property type="match status" value="1"/>
</dbReference>
<dbReference type="Gene3D" id="3.90.430.10">
    <property type="entry name" value="Copper fist DNA-binding domain"/>
    <property type="match status" value="1"/>
</dbReference>
<dbReference type="InterPro" id="IPR051763">
    <property type="entry name" value="Copper_Homeo_Regul"/>
</dbReference>
<dbReference type="InterPro" id="IPR001083">
    <property type="entry name" value="Cu_fist_DNA-bd_dom"/>
</dbReference>
<dbReference type="InterPro" id="IPR036395">
    <property type="entry name" value="Cu_fist_DNA-bd_dom_sf"/>
</dbReference>
<dbReference type="PANTHER" id="PTHR28088">
    <property type="entry name" value="TRANSCRIPTIONAL ACTIVATOR HAA1-RELATED"/>
    <property type="match status" value="1"/>
</dbReference>
<dbReference type="PANTHER" id="PTHR28088:SF5">
    <property type="entry name" value="TRANSCRIPTIONAL ACTIVATOR HAA1-RELATED"/>
    <property type="match status" value="1"/>
</dbReference>
<dbReference type="Pfam" id="PF00649">
    <property type="entry name" value="Copper-fist"/>
    <property type="match status" value="1"/>
</dbReference>
<dbReference type="PRINTS" id="PR00617">
    <property type="entry name" value="COPPERFIST"/>
</dbReference>
<dbReference type="SMART" id="SM01090">
    <property type="entry name" value="Copper-fist"/>
    <property type="match status" value="1"/>
</dbReference>
<dbReference type="SMART" id="SM00412">
    <property type="entry name" value="Cu_FIST"/>
    <property type="match status" value="1"/>
</dbReference>
<dbReference type="SUPFAM" id="SSF57879">
    <property type="entry name" value="Zinc domain conserved in yeast copper-regulated transcription factors"/>
    <property type="match status" value="1"/>
</dbReference>
<dbReference type="PROSITE" id="PS50073">
    <property type="entry name" value="COPPER_FIST_2"/>
    <property type="match status" value="1"/>
</dbReference>
<gene>
    <name type="primary">MAC1</name>
    <name type="ordered locus">CAALFM_C700510WA</name>
    <name type="ORF">CaO19.7068</name>
</gene>
<keyword id="KW-0010">Activator</keyword>
<keyword id="KW-0186">Copper</keyword>
<keyword id="KW-0238">DNA-binding</keyword>
<keyword id="KW-0479">Metal-binding</keyword>
<keyword id="KW-0539">Nucleus</keyword>
<keyword id="KW-1185">Reference proteome</keyword>
<keyword id="KW-0804">Transcription</keyword>
<keyword id="KW-0805">Transcription regulation</keyword>
<keyword id="KW-0862">Zinc</keyword>
<protein>
    <recommendedName>
        <fullName>Metal-binding activator 1</fullName>
    </recommendedName>
</protein>
<accession>Q5AFK0</accession>
<accession>A0A1D8PQK8</accession>
<accession>Q3MPS9</accession>
<proteinExistence type="evidence at transcript level"/>
<comment type="function">
    <text evidence="3 4 5">Copper ion-sensing transcription factor which activates transcription of the CTR1 copper transporter under low-copper conditions. Promotes filamentous and invasive growth.</text>
</comment>
<comment type="subcellular location">
    <subcellularLocation>
        <location evidence="1">Nucleus</location>
    </subcellularLocation>
</comment>
<comment type="induction">
    <text evidence="5 6">Expression is inhibited in the presence of copper. Expression is increased in polymicrobial biofilms during coinfection with S.aureus.</text>
</comment>
<comment type="disruption phenotype">
    <text evidence="3">Results in reduced growth on copper or iron depleted media and the inability to grow on media with a non-fermentable carbon source.</text>
</comment>
<sequence>MILIDDIKYACMECVRGHRSSSCKHHERPLLQVRSKGRPGVYANGNPNHRVAIFAEEIAKSDKPSTNGTKRCKSEPIIVLKASSKQVIDCSSGVIIGPYDETKTKPSTVEKRTPSPPIISDESFINTSACCTPKISKGKSCGCCNNKRKAVNKSKILQNYIKNKLNQKINNNETLVFMNKSHTTNNEQKEDHQLYGMVPVPSCSIPGTCCCDDACSCQGCVVHGNSKYQIPLPTSKQQVTDTTNPFENEEKFIFNSMPQTDKSDLFFNTISTSSNVPPADSSSECSCPPNACDCTNCETHGILNGFRLDDYFKDQSKLMNVLDFNFSELLGTIPEQPIPTEFMQPPSENTLLTSLSSENSFIPNQTKELSTQPPILPLDAQNVCNELDQLEPLVPSLQPCDKKATKWVNNRDTLEDVSDNRVKSCCSKKTK</sequence>
<evidence type="ECO:0000250" key="1"/>
<evidence type="ECO:0000255" key="2">
    <source>
        <dbReference type="PROSITE-ProRule" id="PRU00055"/>
    </source>
</evidence>
<evidence type="ECO:0000269" key="3">
    <source>
    </source>
</evidence>
<evidence type="ECO:0000269" key="4">
    <source>
    </source>
</evidence>
<evidence type="ECO:0000269" key="5">
    <source>
    </source>
</evidence>
<evidence type="ECO:0000269" key="6">
    <source>
    </source>
</evidence>
<organism>
    <name type="scientific">Candida albicans (strain SC5314 / ATCC MYA-2876)</name>
    <name type="common">Yeast</name>
    <dbReference type="NCBI Taxonomy" id="237561"/>
    <lineage>
        <taxon>Eukaryota</taxon>
        <taxon>Fungi</taxon>
        <taxon>Dikarya</taxon>
        <taxon>Ascomycota</taxon>
        <taxon>Saccharomycotina</taxon>
        <taxon>Pichiomycetes</taxon>
        <taxon>Debaryomycetaceae</taxon>
        <taxon>Candida/Lodderomyces clade</taxon>
        <taxon>Candida</taxon>
    </lineage>
</organism>
<feature type="chain" id="PRO_0000422811" description="Metal-binding activator 1">
    <location>
        <begin position="1"/>
        <end position="431"/>
    </location>
</feature>
<feature type="DNA-binding region" description="Copper-fist" evidence="2">
    <location>
        <begin position="1"/>
        <end position="40"/>
    </location>
</feature>
<feature type="binding site" evidence="2">
    <location>
        <position position="11"/>
    </location>
    <ligand>
        <name>Zn(2+)</name>
        <dbReference type="ChEBI" id="CHEBI:29105"/>
    </ligand>
</feature>
<feature type="binding site" evidence="2">
    <location>
        <position position="14"/>
    </location>
    <ligand>
        <name>Zn(2+)</name>
        <dbReference type="ChEBI" id="CHEBI:29105"/>
    </ligand>
</feature>
<feature type="binding site" evidence="2">
    <location>
        <position position="23"/>
    </location>
    <ligand>
        <name>Zn(2+)</name>
        <dbReference type="ChEBI" id="CHEBI:29105"/>
    </ligand>
</feature>
<feature type="binding site" evidence="2">
    <location>
        <position position="25"/>
    </location>
    <ligand>
        <name>Zn(2+)</name>
        <dbReference type="ChEBI" id="CHEBI:29105"/>
    </ligand>
</feature>